<comment type="function">
    <text evidence="1">Bifunctional enzyme that catalyzes the biosynthesis of 4-amino-4-deoxychorismate (ADC) from chorismate and glutamine. In the first step, a glutamine amidotransferase generates ammonia that is channelled between the binding sites of glutamine and chorismate and used along with chorismate in the second step, catalyzed by aminodeoxychorismate synthase, to produce ADC. Required for the synthesis of 4-aminobenzoate (PABA), an important component in tetrahydrofolate biosynthesis. Does not possess ADC lyase activity (By similarity).</text>
</comment>
<comment type="catalytic activity">
    <reaction>
        <text>chorismate + L-glutamine = 4-amino-4-deoxychorismate + L-glutamate</text>
        <dbReference type="Rhea" id="RHEA:11672"/>
        <dbReference type="ChEBI" id="CHEBI:29748"/>
        <dbReference type="ChEBI" id="CHEBI:29985"/>
        <dbReference type="ChEBI" id="CHEBI:58359"/>
        <dbReference type="ChEBI" id="CHEBI:58406"/>
        <dbReference type="EC" id="2.6.1.85"/>
    </reaction>
</comment>
<comment type="pathway">
    <text>Cofactor biosynthesis; tetrahydrofolate biosynthesis; 4-aminobenzoate from chorismate: step 1/2.</text>
</comment>
<comment type="pathway">
    <text>Antibiotic biosynthesis; candicidin biosynthesis.</text>
</comment>
<comment type="subcellular location">
    <subcellularLocation>
        <location evidence="5">Plastid</location>
        <location evidence="5">Chloroplast</location>
    </subcellularLocation>
</comment>
<comment type="domain">
    <text evidence="1">The PABA component provides the glutamine amidotransferase activity.</text>
</comment>
<comment type="domain">
    <text evidence="1">The PABB component catalyzes the formation of ADC by binding chorismate and ammonia.</text>
</comment>
<comment type="similarity">
    <text evidence="5">In the C-terminal section; belongs to the anthranilate synthase component I family.</text>
</comment>
<comment type="sequence caution" evidence="5">
    <conflict type="erroneous gene model prediction">
        <sequence resource="EMBL-CDS" id="BAF20388"/>
    </conflict>
</comment>
<protein>
    <recommendedName>
        <fullName>Probable aminodeoxychorismate synthase, chloroplastic</fullName>
        <shortName>ADC synthase</shortName>
        <ecNumber>2.6.1.85</ecNumber>
    </recommendedName>
    <alternativeName>
        <fullName>P-aminobenzoic acid synthase</fullName>
        <shortName>PABA synthase</shortName>
    </alternativeName>
    <alternativeName>
        <fullName>Para-aminobenzoate synthase</fullName>
    </alternativeName>
</protein>
<name>ADCS_ORYSJ</name>
<reference key="1">
    <citation type="journal article" date="2005" name="Nature">
        <title>The map-based sequence of the rice genome.</title>
        <authorList>
            <consortium name="International rice genome sequencing project (IRGSP)"/>
        </authorList>
    </citation>
    <scope>NUCLEOTIDE SEQUENCE [LARGE SCALE GENOMIC DNA]</scope>
    <source>
        <strain>cv. Nipponbare</strain>
    </source>
</reference>
<reference key="2">
    <citation type="journal article" date="2008" name="Nucleic Acids Res.">
        <title>The rice annotation project database (RAP-DB): 2008 update.</title>
        <authorList>
            <consortium name="The rice annotation project (RAP)"/>
        </authorList>
    </citation>
    <scope>GENOME REANNOTATION</scope>
    <source>
        <strain>cv. Nipponbare</strain>
    </source>
</reference>
<reference key="3">
    <citation type="journal article" date="2013" name="Rice">
        <title>Improvement of the Oryza sativa Nipponbare reference genome using next generation sequence and optical map data.</title>
        <authorList>
            <person name="Kawahara Y."/>
            <person name="de la Bastide M."/>
            <person name="Hamilton J.P."/>
            <person name="Kanamori H."/>
            <person name="McCombie W.R."/>
            <person name="Ouyang S."/>
            <person name="Schwartz D.C."/>
            <person name="Tanaka T."/>
            <person name="Wu J."/>
            <person name="Zhou S."/>
            <person name="Childs K.L."/>
            <person name="Davidson R.M."/>
            <person name="Lin H."/>
            <person name="Quesada-Ocampo L."/>
            <person name="Vaillancourt B."/>
            <person name="Sakai H."/>
            <person name="Lee S.S."/>
            <person name="Kim J."/>
            <person name="Numa H."/>
            <person name="Itoh T."/>
            <person name="Buell C.R."/>
            <person name="Matsumoto T."/>
        </authorList>
    </citation>
    <scope>GENOME REANNOTATION</scope>
    <source>
        <strain>cv. Nipponbare</strain>
    </source>
</reference>
<reference key="4">
    <citation type="journal article" date="2003" name="Science">
        <title>Collection, mapping, and annotation of over 28,000 cDNA clones from japonica rice.</title>
        <authorList>
            <consortium name="The rice full-length cDNA consortium"/>
        </authorList>
    </citation>
    <scope>NUCLEOTIDE SEQUENCE [LARGE SCALE MRNA] OF 564-895</scope>
    <source>
        <strain>cv. Nipponbare</strain>
    </source>
</reference>
<evidence type="ECO:0000250" key="1"/>
<evidence type="ECO:0000255" key="2"/>
<evidence type="ECO:0000255" key="3">
    <source>
        <dbReference type="PROSITE-ProRule" id="PRU00605"/>
    </source>
</evidence>
<evidence type="ECO:0000256" key="4">
    <source>
        <dbReference type="SAM" id="MobiDB-lite"/>
    </source>
</evidence>
<evidence type="ECO:0000305" key="5"/>
<feature type="transit peptide" description="Chloroplast" evidence="2">
    <location>
        <begin position="1"/>
        <end position="48"/>
    </location>
</feature>
<feature type="chain" id="PRO_0000430155" description="Probable aminodeoxychorismate synthase, chloroplastic">
    <location>
        <begin position="49"/>
        <end position="895"/>
    </location>
</feature>
<feature type="domain" description="Glutamine amidotransferase type-1" evidence="3">
    <location>
        <begin position="49"/>
        <end position="307"/>
    </location>
</feature>
<feature type="region of interest" description="Disordered" evidence="4">
    <location>
        <begin position="1"/>
        <end position="45"/>
    </location>
</feature>
<feature type="region of interest" description="PABB component">
    <location>
        <begin position="387"/>
        <end position="875"/>
    </location>
</feature>
<feature type="compositionally biased region" description="Gly residues" evidence="4">
    <location>
        <begin position="32"/>
        <end position="42"/>
    </location>
</feature>
<feature type="active site" description="Nucleophile" evidence="3">
    <location>
        <position position="135"/>
    </location>
</feature>
<feature type="active site" evidence="3">
    <location>
        <position position="281"/>
    </location>
</feature>
<feature type="active site" evidence="3">
    <location>
        <position position="283"/>
    </location>
</feature>
<dbReference type="EC" id="2.6.1.85"/>
<dbReference type="EMBL" id="AP004278">
    <property type="protein sequence ID" value="BAD54000.1"/>
    <property type="molecule type" value="Genomic_DNA"/>
</dbReference>
<dbReference type="EMBL" id="AP008212">
    <property type="protein sequence ID" value="BAF20388.1"/>
    <property type="status" value="ALT_SEQ"/>
    <property type="molecule type" value="Genomic_DNA"/>
</dbReference>
<dbReference type="EMBL" id="AP014962">
    <property type="status" value="NOT_ANNOTATED_CDS"/>
    <property type="molecule type" value="Genomic_DNA"/>
</dbReference>
<dbReference type="EMBL" id="AK059492">
    <property type="status" value="NOT_ANNOTATED_CDS"/>
    <property type="molecule type" value="mRNA"/>
</dbReference>
<dbReference type="RefSeq" id="XP_015643126.1">
    <property type="nucleotide sequence ID" value="XM_015787640.1"/>
</dbReference>
<dbReference type="SMR" id="Q5Z856"/>
<dbReference type="FunCoup" id="Q5Z856">
    <property type="interactions" value="679"/>
</dbReference>
<dbReference type="STRING" id="39947.Q5Z856"/>
<dbReference type="PaxDb" id="39947-Q5Z856"/>
<dbReference type="KEGG" id="dosa:Os06g0699700"/>
<dbReference type="eggNOG" id="KOG1224">
    <property type="taxonomic scope" value="Eukaryota"/>
</dbReference>
<dbReference type="HOGENOM" id="CLU_006493_1_0_1"/>
<dbReference type="InParanoid" id="Q5Z856"/>
<dbReference type="OrthoDB" id="64220at2759"/>
<dbReference type="PlantReactome" id="R-OSA-1119494">
    <property type="pathway name" value="Tryptophan biosynthesis"/>
</dbReference>
<dbReference type="UniPathway" id="UPA00077">
    <property type="reaction ID" value="UER00149"/>
</dbReference>
<dbReference type="UniPathway" id="UPA00101"/>
<dbReference type="Proteomes" id="UP000000763">
    <property type="component" value="Chromosome 6"/>
</dbReference>
<dbReference type="Proteomes" id="UP000059680">
    <property type="component" value="Chromosome 6"/>
</dbReference>
<dbReference type="GO" id="GO:0009507">
    <property type="term" value="C:chloroplast"/>
    <property type="evidence" value="ECO:0007669"/>
    <property type="project" value="UniProtKB-SubCell"/>
</dbReference>
<dbReference type="GO" id="GO:0005737">
    <property type="term" value="C:cytoplasm"/>
    <property type="evidence" value="ECO:0000318"/>
    <property type="project" value="GO_Central"/>
</dbReference>
<dbReference type="GO" id="GO:0046820">
    <property type="term" value="F:4-amino-4-deoxychorismate synthase activity"/>
    <property type="evidence" value="ECO:0000318"/>
    <property type="project" value="GO_Central"/>
</dbReference>
<dbReference type="GO" id="GO:0008153">
    <property type="term" value="P:4-aminobenzoate biosynthetic process"/>
    <property type="evidence" value="ECO:0000318"/>
    <property type="project" value="GO_Central"/>
</dbReference>
<dbReference type="GO" id="GO:0046656">
    <property type="term" value="P:folic acid biosynthetic process"/>
    <property type="evidence" value="ECO:0007669"/>
    <property type="project" value="UniProtKB-KW"/>
</dbReference>
<dbReference type="GO" id="GO:0046654">
    <property type="term" value="P:tetrahydrofolate biosynthetic process"/>
    <property type="evidence" value="ECO:0007669"/>
    <property type="project" value="UniProtKB-UniPathway"/>
</dbReference>
<dbReference type="CDD" id="cd01743">
    <property type="entry name" value="GATase1_Anthranilate_Synthase"/>
    <property type="match status" value="1"/>
</dbReference>
<dbReference type="FunFam" id="3.40.50.880:FF:000072">
    <property type="entry name" value="Aminodeoxychorismate synthase, chloroplastic"/>
    <property type="match status" value="1"/>
</dbReference>
<dbReference type="Gene3D" id="3.40.50.880">
    <property type="match status" value="1"/>
</dbReference>
<dbReference type="Gene3D" id="3.60.120.10">
    <property type="entry name" value="Anthranilate synthase"/>
    <property type="match status" value="1"/>
</dbReference>
<dbReference type="InterPro" id="IPR005802">
    <property type="entry name" value="ADC_synth_comp_1"/>
</dbReference>
<dbReference type="InterPro" id="IPR005801">
    <property type="entry name" value="ADC_synthase"/>
</dbReference>
<dbReference type="InterPro" id="IPR019999">
    <property type="entry name" value="Anth_synth_I-like"/>
</dbReference>
<dbReference type="InterPro" id="IPR006805">
    <property type="entry name" value="Anth_synth_I_N"/>
</dbReference>
<dbReference type="InterPro" id="IPR015890">
    <property type="entry name" value="Chorismate_C"/>
</dbReference>
<dbReference type="InterPro" id="IPR029062">
    <property type="entry name" value="Class_I_gatase-like"/>
</dbReference>
<dbReference type="InterPro" id="IPR017926">
    <property type="entry name" value="GATASE"/>
</dbReference>
<dbReference type="InterPro" id="IPR006221">
    <property type="entry name" value="TrpG/PapA_dom"/>
</dbReference>
<dbReference type="NCBIfam" id="TIGR00553">
    <property type="entry name" value="pabB"/>
    <property type="match status" value="1"/>
</dbReference>
<dbReference type="PANTHER" id="PTHR11236">
    <property type="entry name" value="AMINOBENZOATE/ANTHRANILATE SYNTHASE"/>
    <property type="match status" value="1"/>
</dbReference>
<dbReference type="PANTHER" id="PTHR11236:SF18">
    <property type="entry name" value="AMINODEOXYCHORISMATE SYNTHASE"/>
    <property type="match status" value="1"/>
</dbReference>
<dbReference type="Pfam" id="PF04715">
    <property type="entry name" value="Anth_synt_I_N"/>
    <property type="match status" value="1"/>
</dbReference>
<dbReference type="Pfam" id="PF00425">
    <property type="entry name" value="Chorismate_bind"/>
    <property type="match status" value="1"/>
</dbReference>
<dbReference type="Pfam" id="PF00117">
    <property type="entry name" value="GATase"/>
    <property type="match status" value="2"/>
</dbReference>
<dbReference type="PRINTS" id="PR00097">
    <property type="entry name" value="ANTSNTHASEII"/>
</dbReference>
<dbReference type="PRINTS" id="PR00099">
    <property type="entry name" value="CPSGATASE"/>
</dbReference>
<dbReference type="PRINTS" id="PR00096">
    <property type="entry name" value="GATASE"/>
</dbReference>
<dbReference type="SUPFAM" id="SSF56322">
    <property type="entry name" value="ADC synthase"/>
    <property type="match status" value="1"/>
</dbReference>
<dbReference type="SUPFAM" id="SSF52317">
    <property type="entry name" value="Class I glutamine amidotransferase-like"/>
    <property type="match status" value="1"/>
</dbReference>
<dbReference type="PROSITE" id="PS51273">
    <property type="entry name" value="GATASE_TYPE_1"/>
    <property type="match status" value="1"/>
</dbReference>
<keyword id="KW-0150">Chloroplast</keyword>
<keyword id="KW-0289">Folate biosynthesis</keyword>
<keyword id="KW-0315">Glutamine amidotransferase</keyword>
<keyword id="KW-0511">Multifunctional enzyme</keyword>
<keyword id="KW-0934">Plastid</keyword>
<keyword id="KW-1185">Reference proteome</keyword>
<keyword id="KW-0808">Transferase</keyword>
<keyword id="KW-0809">Transit peptide</keyword>
<sequence>MAALRLPTPPPPRAPAPWLHSSHRRRVAAPRGAGGGGGGGGAVPPPPVRTLLIDNYDSYTYNIFQELSVVNGVPPVVVRNDEWTWRDVYRWVYKERAFDNIVISPGPGSPACPSDIGIGLRILCECGDIPILGVCLGHQALGFVHGAKIVHAPEAIHGRLSELEHNGCYLFNHIPSGINSGFKVVRYHSLVIEPDSLSEDLISIAWTASPKMLSFLESDKPDITSSTLWGSLDNLFVTNQSECSTTDGKMPSINDASELDGYRVLMGVRHSTRPHYGVQFHPESVATHYGRQIFQNFKKITTDFGLQTPLLQERKVHSIGKLERSQISSPDLKNFVANDLLHSARLKLWDSVGPCALPKRSSGDKCLRLQWKKIDNFLNRIGGSENIFSVLFGHHSAEDTFWLDSSSVDQNRARFSFMGGKGGPLWKQMTFHLASQRANCGGNLTIRDAYGCTVRNFLKDGFLDFLDKEMQSIQYIEKDYEGLPFDFHGGFVGYIGYGLKVECDASSNSAKSSTPDACFFFADNLVVVDHNNGDVYILSLHDEYSSGNGDGDYQNSIHSLWLANTEKKLLRMDAMAPRLSINGNSSINGNSFTISSSVNKQRFVIEKSKDEYIRDVQSCLDYIRDGESYELCLTTQMKRRTDYMDALKLYLKLRKQNPAPYAAWLNFSSENLSICCSSPERFLRLDRNAILEAKPIKGTIARGRTPEEDECLRLQLKYSEKDQAENLMIVDLLRNDLGKVCEPGSVHVPRLMDVESYKTVHTMVSTIRGTKMSDLSPVDCVKAAFPGGSMTGAPKVRSMEILDSLETSPRGIYSGSVGFFSYNKTFDLNIVIRTVVLHNGEASIGAGGAIVALSDPEAEYNEMLLKAKAPTKVVEECSQQIYNPDRSDSMQTTVS</sequence>
<accession>Q5Z856</accession>
<accession>Q0D9T5</accession>
<organism>
    <name type="scientific">Oryza sativa subsp. japonica</name>
    <name type="common">Rice</name>
    <dbReference type="NCBI Taxonomy" id="39947"/>
    <lineage>
        <taxon>Eukaryota</taxon>
        <taxon>Viridiplantae</taxon>
        <taxon>Streptophyta</taxon>
        <taxon>Embryophyta</taxon>
        <taxon>Tracheophyta</taxon>
        <taxon>Spermatophyta</taxon>
        <taxon>Magnoliopsida</taxon>
        <taxon>Liliopsida</taxon>
        <taxon>Poales</taxon>
        <taxon>Poaceae</taxon>
        <taxon>BOP clade</taxon>
        <taxon>Oryzoideae</taxon>
        <taxon>Oryzeae</taxon>
        <taxon>Oryzinae</taxon>
        <taxon>Oryza</taxon>
        <taxon>Oryza sativa</taxon>
    </lineage>
</organism>
<proteinExistence type="evidence at transcript level"/>
<gene>
    <name type="primary">ADCS</name>
    <name type="ordered locus">Os06g0699700</name>
    <name type="ordered locus">LOC_Os06g48620</name>
    <name type="ORF">P0468G03.14</name>
</gene>